<comment type="function">
    <text evidence="1">Component of the cytochrome b6-f complex, which mediates electron transfer between photosystem II (PSII) and photosystem I (PSI), cyclic electron flow around PSI, and state transitions. PetL is important for photoautotrophic growth as well as for electron transfer efficiency and stability of the cytochrome b6-f complex.</text>
</comment>
<comment type="subunit">
    <text evidence="1">The 4 large subunits of the cytochrome b6-f complex are cytochrome b6, subunit IV (17 kDa polypeptide, PetD), cytochrome f and the Rieske protein, while the 4 small subunits are PetG, PetL, PetM and PetN. The complex functions as a dimer.</text>
</comment>
<comment type="subcellular location">
    <subcellularLocation>
        <location evidence="1">Plastid</location>
        <location evidence="1">Chloroplast thylakoid membrane</location>
        <topology evidence="1">Single-pass membrane protein</topology>
    </subcellularLocation>
</comment>
<comment type="RNA editing">
    <location>
        <position position="2" evidence="2"/>
    </location>
</comment>
<comment type="similarity">
    <text evidence="1">Belongs to the PetL family.</text>
</comment>
<feature type="chain" id="PRO_0000220449" description="Cytochrome b6-f complex subunit 6">
    <location>
        <begin position="1"/>
        <end position="31"/>
    </location>
</feature>
<feature type="transmembrane region" description="Helical" evidence="1">
    <location>
        <begin position="4"/>
        <end position="24"/>
    </location>
</feature>
<dbReference type="EMBL" id="AJ704445">
    <property type="protein sequence ID" value="CAG28657.1"/>
    <property type="molecule type" value="Genomic_DNA"/>
</dbReference>
<dbReference type="SMR" id="Q5K3R9"/>
<dbReference type="GO" id="GO:0009535">
    <property type="term" value="C:chloroplast thylakoid membrane"/>
    <property type="evidence" value="ECO:0007669"/>
    <property type="project" value="UniProtKB-SubCell"/>
</dbReference>
<dbReference type="GO" id="GO:0009512">
    <property type="term" value="C:cytochrome b6f complex"/>
    <property type="evidence" value="ECO:0007669"/>
    <property type="project" value="InterPro"/>
</dbReference>
<dbReference type="GO" id="GO:0045158">
    <property type="term" value="F:electron transporter, transferring electrons within cytochrome b6/f complex of photosystem II activity"/>
    <property type="evidence" value="ECO:0007669"/>
    <property type="project" value="UniProtKB-UniRule"/>
</dbReference>
<dbReference type="GO" id="GO:0015979">
    <property type="term" value="P:photosynthesis"/>
    <property type="evidence" value="ECO:0007669"/>
    <property type="project" value="UniProtKB-KW"/>
</dbReference>
<dbReference type="HAMAP" id="MF_00433">
    <property type="entry name" value="Cytb6_f_PetL"/>
    <property type="match status" value="1"/>
</dbReference>
<dbReference type="InterPro" id="IPR007802">
    <property type="entry name" value="Cyt_b6/f_cplx_su6"/>
</dbReference>
<dbReference type="PANTHER" id="PTHR37266">
    <property type="entry name" value="CYTOCHROME B6-F COMPLEX SUBUNIT 6"/>
    <property type="match status" value="1"/>
</dbReference>
<dbReference type="PANTHER" id="PTHR37266:SF1">
    <property type="entry name" value="CYTOCHROME B6-F COMPLEX SUBUNIT 6"/>
    <property type="match status" value="1"/>
</dbReference>
<dbReference type="Pfam" id="PF05115">
    <property type="entry name" value="PetL"/>
    <property type="match status" value="1"/>
</dbReference>
<dbReference type="SUPFAM" id="SSF103436">
    <property type="entry name" value="PetL subunit of the cytochrome b6f complex"/>
    <property type="match status" value="1"/>
</dbReference>
<protein>
    <recommendedName>
        <fullName evidence="1">Cytochrome b6-f complex subunit 6</fullName>
    </recommendedName>
    <alternativeName>
        <fullName evidence="1">Cytochrome b6-f complex subunit PetL</fullName>
    </alternativeName>
    <alternativeName>
        <fullName evidence="1">Cytochrome b6-f complex subunit VI</fullName>
    </alternativeName>
</protein>
<keyword id="KW-0150">Chloroplast</keyword>
<keyword id="KW-0249">Electron transport</keyword>
<keyword id="KW-0472">Membrane</keyword>
<keyword id="KW-0602">Photosynthesis</keyword>
<keyword id="KW-0934">Plastid</keyword>
<keyword id="KW-0691">RNA editing</keyword>
<keyword id="KW-0793">Thylakoid</keyword>
<keyword id="KW-0812">Transmembrane</keyword>
<keyword id="KW-1133">Transmembrane helix</keyword>
<keyword id="KW-0813">Transport</keyword>
<name>PETL_FICCA</name>
<organism>
    <name type="scientific">Ficus carica</name>
    <name type="common">Common fig</name>
    <dbReference type="NCBI Taxonomy" id="3494"/>
    <lineage>
        <taxon>Eukaryota</taxon>
        <taxon>Viridiplantae</taxon>
        <taxon>Streptophyta</taxon>
        <taxon>Embryophyta</taxon>
        <taxon>Tracheophyta</taxon>
        <taxon>Spermatophyta</taxon>
        <taxon>Magnoliopsida</taxon>
        <taxon>eudicotyledons</taxon>
        <taxon>Gunneridae</taxon>
        <taxon>Pentapetalae</taxon>
        <taxon>rosids</taxon>
        <taxon>fabids</taxon>
        <taxon>Rosales</taxon>
        <taxon>Moraceae</taxon>
        <taxon>Ficeae</taxon>
        <taxon>Ficus</taxon>
    </lineage>
</organism>
<evidence type="ECO:0000255" key="1">
    <source>
        <dbReference type="HAMAP-Rule" id="MF_00433"/>
    </source>
</evidence>
<evidence type="ECO:0000269" key="2">
    <source>
    </source>
</evidence>
<geneLocation type="chloroplast"/>
<reference key="1">
    <citation type="journal article" date="2004" name="Nucleic Acids Res.">
        <title>Rapid evolution of RNA editing sites in a small non-essential plastid gene.</title>
        <authorList>
            <person name="Fiebig A."/>
            <person name="Stegemann S."/>
            <person name="Bock R."/>
        </authorList>
    </citation>
    <scope>NUCLEOTIDE SEQUENCE [GENOMIC DNA]</scope>
    <scope>RNA EDITING</scope>
    <source>
        <tissue>Leaf</tissue>
    </source>
</reference>
<sequence length="31" mass="3450">MFTITSYFGFLLAALTITSAIFIGLNKIRLI</sequence>
<proteinExistence type="evidence at transcript level"/>
<accession>Q5K3R9</accession>
<gene>
    <name evidence="1" type="primary">petL</name>
</gene>